<organism>
    <name type="scientific">Nothocricetulus migratorius</name>
    <name type="common">Gray dwarf hamster</name>
    <name type="synonym">Cricetulus migratorius</name>
    <dbReference type="NCBI Taxonomy" id="3122392"/>
    <lineage>
        <taxon>Eukaryota</taxon>
        <taxon>Metazoa</taxon>
        <taxon>Chordata</taxon>
        <taxon>Craniata</taxon>
        <taxon>Vertebrata</taxon>
        <taxon>Euteleostomi</taxon>
        <taxon>Mammalia</taxon>
        <taxon>Eutheria</taxon>
        <taxon>Euarchontoglires</taxon>
        <taxon>Glires</taxon>
        <taxon>Rodentia</taxon>
        <taxon>Myomorpha</taxon>
        <taxon>Muroidea</taxon>
        <taxon>Cricetidae</taxon>
        <taxon>Cricetinae</taxon>
        <taxon>Nothocricetulus</taxon>
    </lineage>
</organism>
<comment type="function">
    <text evidence="2 4">Its primary physiological function is unclear. Has cytoprotective activity against internal or environmental stresses. May play a role in neuronal development and synaptic plasticity. May be required for neuronal myelin sheath maintenance. May play a role in iron uptake and iron homeostasis. Soluble oligomers are toxic to cultured neuroblastoma cells and induce apoptosis (in vitro). Association with GPC1 (via its heparan sulfate chains) targets PRNP to lipid rafts. Also provides Cu(2+) or Zn(2+) for the ascorbate-mediated GPC1 deaminase degradation of its heparan sulfate side chains (By similarity).</text>
</comment>
<comment type="subunit">
    <text evidence="2 4">Monomer and homodimer. Has a tendency to aggregate into amyloid fibrils containing a cross-beta spine, formed by a steric zipper of superposed beta-strands. Soluble oligomers may represent an intermediate stage on the path to fibril formation. Copper binding may promote oligomerization. Interacts with GRB2, APP, ERI3/PRNPIP and SYN1. Mislocalized cytosolically exposed PrP interacts with MGRN1; this interaction alters MGRN1 subcellular location and causes lysosomal enlargement. Interacts with KIAA1191.</text>
</comment>
<comment type="subcellular location">
    <subcellularLocation>
        <location evidence="2">Cell membrane</location>
        <topology evidence="2">Lipid-anchor</topology>
        <topology evidence="2">GPI-anchor</topology>
    </subcellularLocation>
    <subcellularLocation>
        <location evidence="4">Golgi apparatus</location>
    </subcellularLocation>
    <text evidence="2">Targeted to lipid rafts via association with the heparan sulfate chains of GPC1. Colocates, in the presence of Cu(2+), to vesicles in para- and perinuclear regions, where both proteins undergo internalization. Heparin displaces PRNP from lipid rafts and promotes endocytosis.</text>
</comment>
<comment type="domain">
    <text evidence="2">The normal, monomeric form has a mainly alpha-helical structure. The disease-associated, protease-resistant form forms amyloid fibrils containing a cross-beta spine, formed by a steric zipper of superposed beta-strands. Disease mutations may favor intermolecular contacts via short beta strands, and may thereby trigger oligomerization.</text>
</comment>
<comment type="domain">
    <text evidence="2">Contains an N-terminal region composed of octamer repeats. At low copper concentrations, the sidechains of His residues from three or four repeats contribute to the binding of a single copper ion. Alternatively, a copper ion can be bound by interaction with the sidechain and backbone amide nitrogen of a single His residue. The observed copper binding stoichiometry suggests that two repeat regions cooperate to stabilize the binding of a single copper ion. At higher copper concentrations, each octamer can bind one copper ion by interactions with the His sidechain and Gly backbone atoms. A mixture of binding types may occur, especially in the case of octamer repeat expansion. Copper binding may stabilize the conformation of this region and may promote oligomerization.</text>
</comment>
<comment type="disease">
    <text evidence="7">PrP is found in high quantity in the brain of humans and animals infected with the degenerative neurological diseases kuru, Creutzfeldt-Jakob disease (CJD), Gerstmann-Straussler syndrome (GSS), scrapie, bovine spongiform encephalopathy (BSE), transmissible mink encephalopathy (TME), etc.</text>
</comment>
<comment type="similarity">
    <text evidence="7">Belongs to the prion family.</text>
</comment>
<keyword id="KW-0034">Amyloid</keyword>
<keyword id="KW-1003">Cell membrane</keyword>
<keyword id="KW-0186">Copper</keyword>
<keyword id="KW-1015">Disulfide bond</keyword>
<keyword id="KW-0325">Glycoprotein</keyword>
<keyword id="KW-0333">Golgi apparatus</keyword>
<keyword id="KW-0336">GPI-anchor</keyword>
<keyword id="KW-0449">Lipoprotein</keyword>
<keyword id="KW-0472">Membrane</keyword>
<keyword id="KW-0479">Metal-binding</keyword>
<keyword id="KW-0640">Prion</keyword>
<keyword id="KW-0677">Repeat</keyword>
<keyword id="KW-0732">Signal</keyword>
<keyword id="KW-0862">Zinc</keyword>
<accession>Q60468</accession>
<name>PRIO_NOTMI</name>
<gene>
    <name type="primary">PRNP</name>
    <name type="synonym">PRP</name>
</gene>
<feature type="signal peptide" evidence="1">
    <location>
        <begin position="1"/>
        <end position="22"/>
    </location>
</feature>
<feature type="chain" id="PRO_0000025667" description="Major prion protein">
    <location>
        <begin position="23"/>
        <end position="231"/>
    </location>
</feature>
<feature type="propeptide" id="PRO_0000025668" description="Removed in mature form" evidence="5">
    <location>
        <begin position="232"/>
        <end position="254"/>
    </location>
</feature>
<feature type="repeat" description="1">
    <location>
        <begin position="51"/>
        <end position="59"/>
    </location>
</feature>
<feature type="repeat" description="2">
    <location>
        <begin position="60"/>
        <end position="67"/>
    </location>
</feature>
<feature type="repeat" description="3">
    <location>
        <begin position="68"/>
        <end position="75"/>
    </location>
</feature>
<feature type="repeat" description="4">
    <location>
        <begin position="76"/>
        <end position="83"/>
    </location>
</feature>
<feature type="repeat" description="5">
    <location>
        <begin position="84"/>
        <end position="91"/>
    </location>
</feature>
<feature type="region of interest" description="Interaction with GRB2, ERI3 and SYN1" evidence="4">
    <location>
        <begin position="23"/>
        <end position="231"/>
    </location>
</feature>
<feature type="region of interest" description="Disordered" evidence="6">
    <location>
        <begin position="25"/>
        <end position="108"/>
    </location>
</feature>
<feature type="region of interest" description="5 X 8 AA tandem repeats of P-H-G-G-G-W-G-Q">
    <location>
        <begin position="51"/>
        <end position="91"/>
    </location>
</feature>
<feature type="region of interest" description="PrP27-30 (protease resistant core)">
    <location>
        <begin position="90"/>
        <end position="231"/>
    </location>
</feature>
<feature type="compositionally biased region" description="Gly residues" evidence="6">
    <location>
        <begin position="52"/>
        <end position="95"/>
    </location>
</feature>
<feature type="binding site" evidence="2">
    <location>
        <position position="61"/>
    </location>
    <ligand>
        <name>Cu(2+)</name>
        <dbReference type="ChEBI" id="CHEBI:29036"/>
        <label>1</label>
    </ligand>
</feature>
<feature type="binding site" evidence="2">
    <location>
        <position position="62"/>
    </location>
    <ligand>
        <name>Cu(2+)</name>
        <dbReference type="ChEBI" id="CHEBI:29036"/>
        <label>1</label>
    </ligand>
</feature>
<feature type="binding site" evidence="2">
    <location>
        <position position="63"/>
    </location>
    <ligand>
        <name>Cu(2+)</name>
        <dbReference type="ChEBI" id="CHEBI:29036"/>
        <label>1</label>
    </ligand>
</feature>
<feature type="binding site" evidence="2">
    <location>
        <position position="69"/>
    </location>
    <ligand>
        <name>Cu(2+)</name>
        <dbReference type="ChEBI" id="CHEBI:29036"/>
        <label>2</label>
    </ligand>
</feature>
<feature type="binding site" evidence="2">
    <location>
        <position position="70"/>
    </location>
    <ligand>
        <name>Cu(2+)</name>
        <dbReference type="ChEBI" id="CHEBI:29036"/>
        <label>2</label>
    </ligand>
</feature>
<feature type="binding site" evidence="2">
    <location>
        <position position="71"/>
    </location>
    <ligand>
        <name>Cu(2+)</name>
        <dbReference type="ChEBI" id="CHEBI:29036"/>
        <label>2</label>
    </ligand>
</feature>
<feature type="binding site" evidence="2">
    <location>
        <position position="77"/>
    </location>
    <ligand>
        <name>Cu(2+)</name>
        <dbReference type="ChEBI" id="CHEBI:29036"/>
        <label>3</label>
    </ligand>
</feature>
<feature type="binding site" evidence="2">
    <location>
        <position position="78"/>
    </location>
    <ligand>
        <name>Cu(2+)</name>
        <dbReference type="ChEBI" id="CHEBI:29036"/>
        <label>3</label>
    </ligand>
</feature>
<feature type="binding site" evidence="2">
    <location>
        <position position="79"/>
    </location>
    <ligand>
        <name>Cu(2+)</name>
        <dbReference type="ChEBI" id="CHEBI:29036"/>
        <label>3</label>
    </ligand>
</feature>
<feature type="binding site" evidence="2">
    <location>
        <position position="85"/>
    </location>
    <ligand>
        <name>Cu(2+)</name>
        <dbReference type="ChEBI" id="CHEBI:29036"/>
        <label>4</label>
    </ligand>
</feature>
<feature type="binding site" evidence="2">
    <location>
        <position position="86"/>
    </location>
    <ligand>
        <name>Cu(2+)</name>
        <dbReference type="ChEBI" id="CHEBI:29036"/>
        <label>4</label>
    </ligand>
</feature>
<feature type="binding site" evidence="2">
    <location>
        <position position="87"/>
    </location>
    <ligand>
        <name>Cu(2+)</name>
        <dbReference type="ChEBI" id="CHEBI:29036"/>
        <label>4</label>
    </ligand>
</feature>
<feature type="lipid moiety-binding region" description="GPI-anchor amidated serine" evidence="3">
    <location>
        <position position="231"/>
    </location>
</feature>
<feature type="glycosylation site" description="N-linked (GlcNAc...) asparagine" evidence="1">
    <location>
        <position position="181"/>
    </location>
</feature>
<feature type="glycosylation site" description="N-linked (GlcNAc...) asparagine" evidence="1">
    <location>
        <position position="197"/>
    </location>
</feature>
<feature type="disulfide bond" evidence="3">
    <location>
        <begin position="179"/>
        <end position="214"/>
    </location>
</feature>
<dbReference type="EMBL" id="M33959">
    <property type="protein sequence ID" value="AAA37014.1"/>
    <property type="molecule type" value="Genomic_DNA"/>
</dbReference>
<dbReference type="BMRB" id="Q60468"/>
<dbReference type="SMR" id="Q60468"/>
<dbReference type="GlyCosmos" id="Q60468">
    <property type="glycosylation" value="2 sites, No reported glycans"/>
</dbReference>
<dbReference type="GO" id="GO:0005794">
    <property type="term" value="C:Golgi apparatus"/>
    <property type="evidence" value="ECO:0007669"/>
    <property type="project" value="UniProtKB-SubCell"/>
</dbReference>
<dbReference type="GO" id="GO:0005886">
    <property type="term" value="C:plasma membrane"/>
    <property type="evidence" value="ECO:0007669"/>
    <property type="project" value="UniProtKB-SubCell"/>
</dbReference>
<dbReference type="GO" id="GO:0098552">
    <property type="term" value="C:side of membrane"/>
    <property type="evidence" value="ECO:0007669"/>
    <property type="project" value="UniProtKB-KW"/>
</dbReference>
<dbReference type="GO" id="GO:0005507">
    <property type="term" value="F:copper ion binding"/>
    <property type="evidence" value="ECO:0000250"/>
    <property type="project" value="UniProtKB"/>
</dbReference>
<dbReference type="GO" id="GO:0051260">
    <property type="term" value="P:protein homooligomerization"/>
    <property type="evidence" value="ECO:0007669"/>
    <property type="project" value="InterPro"/>
</dbReference>
<dbReference type="FunFam" id="1.10.790.10:FF:000001">
    <property type="entry name" value="Major prion protein"/>
    <property type="match status" value="1"/>
</dbReference>
<dbReference type="Gene3D" id="1.10.790.10">
    <property type="entry name" value="Prion/Doppel protein, beta-ribbon domain"/>
    <property type="match status" value="1"/>
</dbReference>
<dbReference type="InterPro" id="IPR000817">
    <property type="entry name" value="Prion"/>
</dbReference>
<dbReference type="InterPro" id="IPR036924">
    <property type="entry name" value="Prion/Doppel_b-ribbon_dom_sf"/>
</dbReference>
<dbReference type="InterPro" id="IPR022416">
    <property type="entry name" value="Prion/Doppel_prot_b-ribbon_dom"/>
</dbReference>
<dbReference type="InterPro" id="IPR020949">
    <property type="entry name" value="Prion_copper_b_octapeptide"/>
</dbReference>
<dbReference type="InterPro" id="IPR025860">
    <property type="entry name" value="Prion_N"/>
</dbReference>
<dbReference type="PANTHER" id="PTHR15506">
    <property type="entry name" value="DOPPEL PRION"/>
    <property type="match status" value="1"/>
</dbReference>
<dbReference type="PANTHER" id="PTHR15506:SF2">
    <property type="entry name" value="MAJOR PRION PROTEIN"/>
    <property type="match status" value="1"/>
</dbReference>
<dbReference type="Pfam" id="PF00377">
    <property type="entry name" value="Prion"/>
    <property type="match status" value="1"/>
</dbReference>
<dbReference type="Pfam" id="PF11587">
    <property type="entry name" value="Prion_bPrPp"/>
    <property type="match status" value="1"/>
</dbReference>
<dbReference type="Pfam" id="PF03991">
    <property type="entry name" value="Prion_octapep"/>
    <property type="match status" value="1"/>
</dbReference>
<dbReference type="PRINTS" id="PR00341">
    <property type="entry name" value="PRION"/>
</dbReference>
<dbReference type="SMART" id="SM00157">
    <property type="entry name" value="PRP"/>
    <property type="match status" value="1"/>
</dbReference>
<dbReference type="SUPFAM" id="SSF54098">
    <property type="entry name" value="Prion-like"/>
    <property type="match status" value="1"/>
</dbReference>
<dbReference type="PROSITE" id="PS00291">
    <property type="entry name" value="PRION_1"/>
    <property type="match status" value="1"/>
</dbReference>
<dbReference type="PROSITE" id="PS00706">
    <property type="entry name" value="PRION_2"/>
    <property type="match status" value="1"/>
</dbReference>
<proteinExistence type="inferred from homology"/>
<reference key="1">
    <citation type="journal article" date="1990" name="Mol. Cell. Biol.">
        <title>Three hamster species with different scrapie incubation times and neuropathological features encode distinct prion proteins.</title>
        <authorList>
            <person name="Lowenstein D.H."/>
            <person name="Butler D.A."/>
            <person name="Westaway D."/>
            <person name="McKinley M.P."/>
            <person name="DeArmond S.J."/>
            <person name="Prusiner S.B."/>
        </authorList>
    </citation>
    <scope>NUCLEOTIDE SEQUENCE [GENOMIC DNA]</scope>
    <source>
        <tissue>Brain</tissue>
    </source>
</reference>
<sequence>MANLSYWLLALFVATWTDVGLCKKRPKPGGWNTGGSRYPGQGSPGGNRYPPQGGGTWGQPHGGGWGQPHGGGWGQPHGGGWGQPHGGGWGQGGGTHNQWNKPNKPKTSMKHMAGAAAAGAVVGGLGGYMLGSAMSRPMLHFGNDWEDRYYRENMNRYPNQVYYRPVDQYNNQNNFVHDCVNITIKQHTVTTTTKGENFTETDVKMMERVVEQMCVTQYQKESQAYYDGRRSSAVLFSSPPVILLISFLIFLIVG</sequence>
<protein>
    <recommendedName>
        <fullName>Major prion protein</fullName>
        <shortName>PrP</shortName>
    </recommendedName>
    <alternativeName>
        <fullName>PrP27-30</fullName>
    </alternativeName>
    <alternativeName>
        <fullName>PrP33-35C</fullName>
    </alternativeName>
    <cdAntigenName>CD230</cdAntigenName>
</protein>
<evidence type="ECO:0000250" key="1"/>
<evidence type="ECO:0000250" key="2">
    <source>
        <dbReference type="UniProtKB" id="P04156"/>
    </source>
</evidence>
<evidence type="ECO:0000250" key="3">
    <source>
        <dbReference type="UniProtKB" id="P04273"/>
    </source>
</evidence>
<evidence type="ECO:0000250" key="4">
    <source>
        <dbReference type="UniProtKB" id="P04925"/>
    </source>
</evidence>
<evidence type="ECO:0000255" key="5"/>
<evidence type="ECO:0000256" key="6">
    <source>
        <dbReference type="SAM" id="MobiDB-lite"/>
    </source>
</evidence>
<evidence type="ECO:0000305" key="7"/>